<sequence length="243" mass="25571">MGTPETSREPCPDRILDDIGGAFGMGAVGGSAFHFIKGTYNSPKGSRFVGGTQSVSMNAPRTGGSFAVWGGLFSTFDCTMVYLRQKEDPWNSIIAGAATGGFLSMRQGAGAASRSAIFGGVLLALIEGAGIMLNKVLAQPQNMMMEDPGMQGMPGMQGMQGMPGMPGMQGMPGMQGMQMGQMQSQAQIRSESQNQNTASSSSSSSWFGGLFDKKKEEVQPGSESKTEVLESFDAPPVPSFEFK</sequence>
<evidence type="ECO:0000250" key="1"/>
<evidence type="ECO:0000255" key="2"/>
<evidence type="ECO:0000256" key="3">
    <source>
        <dbReference type="SAM" id="MobiDB-lite"/>
    </source>
</evidence>
<evidence type="ECO:0000269" key="4">
    <source>
    </source>
</evidence>
<evidence type="ECO:0000269" key="5">
    <source>
    </source>
</evidence>
<evidence type="ECO:0000269" key="6">
    <source>
    </source>
</evidence>
<evidence type="ECO:0000269" key="7">
    <source>
    </source>
</evidence>
<evidence type="ECO:0000269" key="8">
    <source>
    </source>
</evidence>
<evidence type="ECO:0000305" key="9"/>
<accession>Q9SP35</accession>
<accession>Q9ZUS5</accession>
<reference key="1">
    <citation type="submission" date="1999-09" db="EMBL/GenBank/DDBJ databases">
        <title>A component of the Arabidopsis thaliana mitochondrial inner membrane protein translocase, atTIM17.</title>
        <authorList>
            <person name="Miernyk J.A."/>
            <person name="Coop N.E."/>
        </authorList>
    </citation>
    <scope>NUCLEOTIDE SEQUENCE [MRNA]</scope>
</reference>
<reference key="2">
    <citation type="journal article" date="1999" name="Nature">
        <title>Sequence and analysis of chromosome 2 of the plant Arabidopsis thaliana.</title>
        <authorList>
            <person name="Lin X."/>
            <person name="Kaul S."/>
            <person name="Rounsley S.D."/>
            <person name="Shea T.P."/>
            <person name="Benito M.-I."/>
            <person name="Town C.D."/>
            <person name="Fujii C.Y."/>
            <person name="Mason T.M."/>
            <person name="Bowman C.L."/>
            <person name="Barnstead M.E."/>
            <person name="Feldblyum T.V."/>
            <person name="Buell C.R."/>
            <person name="Ketchum K.A."/>
            <person name="Lee J.J."/>
            <person name="Ronning C.M."/>
            <person name="Koo H.L."/>
            <person name="Moffat K.S."/>
            <person name="Cronin L.A."/>
            <person name="Shen M."/>
            <person name="Pai G."/>
            <person name="Van Aken S."/>
            <person name="Umayam L."/>
            <person name="Tallon L.J."/>
            <person name="Gill J.E."/>
            <person name="Adams M.D."/>
            <person name="Carrera A.J."/>
            <person name="Creasy T.H."/>
            <person name="Goodman H.M."/>
            <person name="Somerville C.R."/>
            <person name="Copenhaver G.P."/>
            <person name="Preuss D."/>
            <person name="Nierman W.C."/>
            <person name="White O."/>
            <person name="Eisen J.A."/>
            <person name="Salzberg S.L."/>
            <person name="Fraser C.M."/>
            <person name="Venter J.C."/>
        </authorList>
    </citation>
    <scope>NUCLEOTIDE SEQUENCE [LARGE SCALE GENOMIC DNA]</scope>
    <source>
        <strain>cv. Columbia</strain>
    </source>
</reference>
<reference key="3">
    <citation type="journal article" date="2017" name="Plant J.">
        <title>Araport11: a complete reannotation of the Arabidopsis thaliana reference genome.</title>
        <authorList>
            <person name="Cheng C.Y."/>
            <person name="Krishnakumar V."/>
            <person name="Chan A.P."/>
            <person name="Thibaud-Nissen F."/>
            <person name="Schobel S."/>
            <person name="Town C.D."/>
        </authorList>
    </citation>
    <scope>GENOME REANNOTATION</scope>
    <source>
        <strain>cv. Columbia</strain>
    </source>
</reference>
<reference key="4">
    <citation type="journal article" date="2003" name="Science">
        <title>Empirical analysis of transcriptional activity in the Arabidopsis genome.</title>
        <authorList>
            <person name="Yamada K."/>
            <person name="Lim J."/>
            <person name="Dale J.M."/>
            <person name="Chen H."/>
            <person name="Shinn P."/>
            <person name="Palm C.J."/>
            <person name="Southwick A.M."/>
            <person name="Wu H.C."/>
            <person name="Kim C.J."/>
            <person name="Nguyen M."/>
            <person name="Pham P.K."/>
            <person name="Cheuk R.F."/>
            <person name="Karlin-Newmann G."/>
            <person name="Liu S.X."/>
            <person name="Lam B."/>
            <person name="Sakano H."/>
            <person name="Wu T."/>
            <person name="Yu G."/>
            <person name="Miranda M."/>
            <person name="Quach H.L."/>
            <person name="Tripp M."/>
            <person name="Chang C.H."/>
            <person name="Lee J.M."/>
            <person name="Toriumi M.J."/>
            <person name="Chan M.M."/>
            <person name="Tang C.C."/>
            <person name="Onodera C.S."/>
            <person name="Deng J.M."/>
            <person name="Akiyama K."/>
            <person name="Ansari Y."/>
            <person name="Arakawa T."/>
            <person name="Banh J."/>
            <person name="Banno F."/>
            <person name="Bowser L."/>
            <person name="Brooks S.Y."/>
            <person name="Carninci P."/>
            <person name="Chao Q."/>
            <person name="Choy N."/>
            <person name="Enju A."/>
            <person name="Goldsmith A.D."/>
            <person name="Gurjal M."/>
            <person name="Hansen N.F."/>
            <person name="Hayashizaki Y."/>
            <person name="Johnson-Hopson C."/>
            <person name="Hsuan V.W."/>
            <person name="Iida K."/>
            <person name="Karnes M."/>
            <person name="Khan S."/>
            <person name="Koesema E."/>
            <person name="Ishida J."/>
            <person name="Jiang P.X."/>
            <person name="Jones T."/>
            <person name="Kawai J."/>
            <person name="Kamiya A."/>
            <person name="Meyers C."/>
            <person name="Nakajima M."/>
            <person name="Narusaka M."/>
            <person name="Seki M."/>
            <person name="Sakurai T."/>
            <person name="Satou M."/>
            <person name="Tamse R."/>
            <person name="Vaysberg M."/>
            <person name="Wallender E.K."/>
            <person name="Wong C."/>
            <person name="Yamamura Y."/>
            <person name="Yuan S."/>
            <person name="Shinozaki K."/>
            <person name="Davis R.W."/>
            <person name="Theologis A."/>
            <person name="Ecker J.R."/>
        </authorList>
    </citation>
    <scope>NUCLEOTIDE SEQUENCE [LARGE SCALE MRNA]</scope>
    <source>
        <strain>cv. Columbia</strain>
    </source>
</reference>
<reference key="5">
    <citation type="journal article" date="2003" name="Plant Physiol.">
        <title>Identification, expression, and import of components 17 and 23 of the inner mitochondrial membrane translocase from Arabidopsis.</title>
        <authorList>
            <person name="Murcha M.W."/>
            <person name="Lister R."/>
            <person name="Ho A.Y."/>
            <person name="Whelan J."/>
        </authorList>
    </citation>
    <scope>FUNCTION</scope>
    <scope>TISSUE SPECIFICITY</scope>
    <scope>DEVELOPMENTAL STAGE</scope>
    <scope>SUBCELLULAR LOCATION</scope>
</reference>
<reference key="6">
    <citation type="journal article" date="2004" name="Plant Physiol.">
        <title>A transcriptomic and proteomic characterization of the Arabidopsis mitochondrial protein import apparatus and its response to mitochondrial dysfunction.</title>
        <authorList>
            <person name="Lister R."/>
            <person name="Chew O."/>
            <person name="Lee M.N."/>
            <person name="Heazlewood J.L."/>
            <person name="Clifton R."/>
            <person name="Parker K.L."/>
            <person name="Millar A.H."/>
            <person name="Whelan J."/>
        </authorList>
    </citation>
    <scope>TISSUE SPECIFICITY</scope>
    <scope>SUBCELLULAR LOCATION</scope>
    <scope>IDENTIFICATION BY MASS SPECTROMETRY</scope>
    <scope>INDUCTION</scope>
</reference>
<reference key="7">
    <citation type="journal article" date="2005" name="J. Biol. Chem.">
        <title>The C-terminal region of TIM17 links the outer and inner mitochondrial membranes in Arabidopsis and is essential for protein import.</title>
        <authorList>
            <person name="Murcha M.W."/>
            <person name="Elhafez D."/>
            <person name="Millar A.H."/>
            <person name="Whelan J."/>
        </authorList>
    </citation>
    <scope>FUNCTION</scope>
    <scope>SUBCELLULAR LOCATION</scope>
    <scope>TOPOLOGY</scope>
</reference>
<reference key="8">
    <citation type="journal article" date="2007" name="Plant Physiol.">
        <title>Characterization of the preprotein and amino acid transporter gene family in Arabidopsis.</title>
        <authorList>
            <person name="Murcha M.W."/>
            <person name="Elhafez D."/>
            <person name="Lister R."/>
            <person name="Tonti-Filippini J."/>
            <person name="Baumgartner M."/>
            <person name="Philippar K."/>
            <person name="Carrie C."/>
            <person name="Mokranjac D."/>
            <person name="Soll J."/>
            <person name="Whelan J."/>
        </authorList>
    </citation>
    <scope>SUBCELLULAR LOCATION</scope>
</reference>
<reference key="9">
    <citation type="journal article" date="2012" name="Plant Cell">
        <title>Dual location of the mitochondrial preprotein transporters B14.7 and Tim23-2 in complex I and the TIM17:23 complex in Arabidopsis links mitochondrial activity and biogenesis.</title>
        <authorList>
            <person name="Wang Y."/>
            <person name="Carrie C."/>
            <person name="Giraud E."/>
            <person name="Elhafez D."/>
            <person name="Narsai R."/>
            <person name="Duncan O."/>
            <person name="Whelan J."/>
            <person name="Murcha M.W."/>
        </authorList>
    </citation>
    <scope>INTERACTION WITH TIM23-2</scope>
    <scope>DISRUPTION PHENOTYPE</scope>
</reference>
<keyword id="KW-0472">Membrane</keyword>
<keyword id="KW-0496">Mitochondrion</keyword>
<keyword id="KW-0999">Mitochondrion inner membrane</keyword>
<keyword id="KW-1000">Mitochondrion outer membrane</keyword>
<keyword id="KW-0653">Protein transport</keyword>
<keyword id="KW-1185">Reference proteome</keyword>
<keyword id="KW-0677">Repeat</keyword>
<keyword id="KW-0811">Translocation</keyword>
<keyword id="KW-0812">Transmembrane</keyword>
<keyword id="KW-1133">Transmembrane helix</keyword>
<keyword id="KW-0813">Transport</keyword>
<gene>
    <name type="primary">TIM17-2</name>
    <name type="ordered locus">At2g37410</name>
    <name type="ORF">F3G5.20</name>
</gene>
<name>TI172_ARATH</name>
<feature type="chain" id="PRO_0000210293" description="Mitochondrial import inner membrane translocase subunit TIM17-2">
    <location>
        <begin position="1"/>
        <end position="243"/>
    </location>
</feature>
<feature type="transmembrane region" description="Helical" evidence="2">
    <location>
        <begin position="19"/>
        <end position="36"/>
    </location>
</feature>
<feature type="transmembrane region" description="Helical" evidence="2">
    <location>
        <begin position="66"/>
        <end position="83"/>
    </location>
</feature>
<feature type="transmembrane region" description="Helical" evidence="2">
    <location>
        <begin position="90"/>
        <end position="109"/>
    </location>
</feature>
<feature type="transmembrane region" description="Helical" evidence="2">
    <location>
        <begin position="115"/>
        <end position="137"/>
    </location>
</feature>
<feature type="repeat" description="1">
    <location>
        <begin position="149"/>
        <end position="151"/>
    </location>
</feature>
<feature type="repeat" description="2">
    <location>
        <begin position="152"/>
        <end position="154"/>
    </location>
</feature>
<feature type="repeat" description="3">
    <location>
        <begin position="155"/>
        <end position="157"/>
    </location>
</feature>
<feature type="repeat" description="4">
    <location>
        <begin position="158"/>
        <end position="160"/>
    </location>
</feature>
<feature type="repeat" description="5">
    <location>
        <begin position="161"/>
        <end position="163"/>
    </location>
</feature>
<feature type="repeat" description="6">
    <location>
        <begin position="164"/>
        <end position="166"/>
    </location>
</feature>
<feature type="repeat" description="7">
    <location>
        <begin position="167"/>
        <end position="169"/>
    </location>
</feature>
<feature type="repeat" description="8">
    <location>
        <begin position="170"/>
        <end position="172"/>
    </location>
</feature>
<feature type="repeat" description="9">
    <location>
        <begin position="173"/>
        <end position="175"/>
    </location>
</feature>
<feature type="repeat" description="10">
    <location>
        <begin position="176"/>
        <end position="178"/>
    </location>
</feature>
<feature type="region of interest" description="10 X approximate repeats GMQ/P">
    <location>
        <begin position="149"/>
        <end position="178"/>
    </location>
</feature>
<feature type="region of interest" description="Disordered" evidence="3">
    <location>
        <begin position="166"/>
        <end position="243"/>
    </location>
</feature>
<feature type="compositionally biased region" description="Low complexity" evidence="3">
    <location>
        <begin position="166"/>
        <end position="183"/>
    </location>
</feature>
<feature type="compositionally biased region" description="Polar residues" evidence="3">
    <location>
        <begin position="184"/>
        <end position="198"/>
    </location>
</feature>
<feature type="compositionally biased region" description="Basic and acidic residues" evidence="3">
    <location>
        <begin position="211"/>
        <end position="228"/>
    </location>
</feature>
<feature type="sequence conflict" description="In Ref. 1; AAF03749." evidence="9" ref="1">
    <original>A</original>
    <variation>T</variation>
    <location>
        <position position="116"/>
    </location>
</feature>
<feature type="sequence conflict" description="In Ref. 1; AAF03749." evidence="9" ref="1">
    <original>Q</original>
    <variation>H</variation>
    <location>
        <position position="219"/>
    </location>
</feature>
<organism>
    <name type="scientific">Arabidopsis thaliana</name>
    <name type="common">Mouse-ear cress</name>
    <dbReference type="NCBI Taxonomy" id="3702"/>
    <lineage>
        <taxon>Eukaryota</taxon>
        <taxon>Viridiplantae</taxon>
        <taxon>Streptophyta</taxon>
        <taxon>Embryophyta</taxon>
        <taxon>Tracheophyta</taxon>
        <taxon>Spermatophyta</taxon>
        <taxon>Magnoliopsida</taxon>
        <taxon>eudicotyledons</taxon>
        <taxon>Gunneridae</taxon>
        <taxon>Pentapetalae</taxon>
        <taxon>rosids</taxon>
        <taxon>malvids</taxon>
        <taxon>Brassicales</taxon>
        <taxon>Brassicaceae</taxon>
        <taxon>Camelineae</taxon>
        <taxon>Arabidopsis</taxon>
    </lineage>
</organism>
<proteinExistence type="evidence at protein level"/>
<protein>
    <recommendedName>
        <fullName>Mitochondrial import inner membrane translocase subunit TIM17-2</fullName>
    </recommendedName>
</protein>
<comment type="function">
    <text evidence="4 6">Essential component of the TIM17:23 complex, a complex that mediates the translocation of transit peptide-containing proteins across the mitochondrial inner membrane. Links the inner and outer membranes.</text>
</comment>
<comment type="subunit">
    <text evidence="1 8">Component of the TIM17:23 complex at least composed of TIM23, TIM17 and TIM50. The complex interacts with the TIM44 component of the PAM complex (By similarity). Interacts with TIM23-2.</text>
</comment>
<comment type="interaction">
    <interactant intactId="EBI-25529919">
        <id>Q9SP35</id>
    </interactant>
    <interactant intactId="EBI-25519488">
        <id>Q9SZU7</id>
        <label>KAI2</label>
    </interactant>
    <organismsDiffer>false</organismsDiffer>
    <experiments>5</experiments>
</comment>
<comment type="interaction">
    <interactant intactId="EBI-25529919">
        <id>Q9SP35</id>
    </interactant>
    <interactant intactId="EBI-25529872">
        <id>Q9SIM9</id>
        <label>MAX2</label>
    </interactant>
    <organismsDiffer>false</organismsDiffer>
    <experiments>3</experiments>
</comment>
<comment type="subcellular location">
    <subcellularLocation>
        <location evidence="9">Mitochondrion inner membrane</location>
        <topology evidence="9">Multi-pass membrane protein</topology>
    </subcellularLocation>
    <subcellularLocation>
        <location evidence="4 5 6 7">Mitochondrion outer membrane</location>
    </subcellularLocation>
    <text>The C-terminal region is located in the outer membrane.</text>
</comment>
<comment type="tissue specificity">
    <text evidence="4 5">Expressed in roots, flowers, leaves and young cotyledons.</text>
</comment>
<comment type="developmental stage">
    <text evidence="4">Peak of expression during cotyledon development.</text>
</comment>
<comment type="induction">
    <text evidence="5">Up-regulated after antimycin A or rotenone treatments.</text>
</comment>
<comment type="domain">
    <text>An internal targeting signal (103-117) is required for insertion into the mitochondrial inner membrane in a membrane potential-dependent manner. The C-terminal region is exposed on the outer surface of the outer membrane and is essential for protein import.</text>
</comment>
<comment type="disruption phenotype">
    <text evidence="8">Lethal when homozygous.</text>
</comment>
<comment type="similarity">
    <text evidence="9">Belongs to the Tim17/Tim22/Tim23 family.</text>
</comment>
<dbReference type="EMBL" id="AF186847">
    <property type="protein sequence ID" value="AAF03749.1"/>
    <property type="molecule type" value="mRNA"/>
</dbReference>
<dbReference type="EMBL" id="AC005896">
    <property type="protein sequence ID" value="AAC98060.1"/>
    <property type="molecule type" value="Genomic_DNA"/>
</dbReference>
<dbReference type="EMBL" id="CP002685">
    <property type="protein sequence ID" value="AEC09394.1"/>
    <property type="molecule type" value="Genomic_DNA"/>
</dbReference>
<dbReference type="EMBL" id="CP002685">
    <property type="protein sequence ID" value="AEC09395.1"/>
    <property type="molecule type" value="Genomic_DNA"/>
</dbReference>
<dbReference type="EMBL" id="AF360258">
    <property type="protein sequence ID" value="AAK25968.1"/>
    <property type="molecule type" value="mRNA"/>
</dbReference>
<dbReference type="EMBL" id="AY040072">
    <property type="protein sequence ID" value="AAK64130.1"/>
    <property type="molecule type" value="mRNA"/>
</dbReference>
<dbReference type="EMBL" id="AY056107">
    <property type="protein sequence ID" value="AAL06994.1"/>
    <property type="molecule type" value="mRNA"/>
</dbReference>
<dbReference type="PIR" id="D84792">
    <property type="entry name" value="D84792"/>
</dbReference>
<dbReference type="RefSeq" id="NP_181277.1">
    <property type="nucleotide sequence ID" value="NM_129296.4"/>
</dbReference>
<dbReference type="RefSeq" id="NP_973621.1">
    <property type="nucleotide sequence ID" value="NM_201892.1"/>
</dbReference>
<dbReference type="SMR" id="Q9SP35"/>
<dbReference type="BioGRID" id="3661">
    <property type="interactions" value="3"/>
</dbReference>
<dbReference type="FunCoup" id="Q9SP35">
    <property type="interactions" value="3639"/>
</dbReference>
<dbReference type="IntAct" id="Q9SP35">
    <property type="interactions" value="2"/>
</dbReference>
<dbReference type="STRING" id="3702.Q9SP35"/>
<dbReference type="TCDB" id="3.A.8.1.4">
    <property type="family name" value="the mitochondrial protein translocase (mpt) family"/>
</dbReference>
<dbReference type="PaxDb" id="3702-AT2G37410.1"/>
<dbReference type="ProteomicsDB" id="234398"/>
<dbReference type="EnsemblPlants" id="AT2G37410.1">
    <property type="protein sequence ID" value="AT2G37410.1"/>
    <property type="gene ID" value="AT2G37410"/>
</dbReference>
<dbReference type="EnsemblPlants" id="AT2G37410.2">
    <property type="protein sequence ID" value="AT2G37410.2"/>
    <property type="gene ID" value="AT2G37410"/>
</dbReference>
<dbReference type="GeneID" id="818317"/>
<dbReference type="Gramene" id="AT2G37410.1">
    <property type="protein sequence ID" value="AT2G37410.1"/>
    <property type="gene ID" value="AT2G37410"/>
</dbReference>
<dbReference type="Gramene" id="AT2G37410.2">
    <property type="protein sequence ID" value="AT2G37410.2"/>
    <property type="gene ID" value="AT2G37410"/>
</dbReference>
<dbReference type="KEGG" id="ath:AT2G37410"/>
<dbReference type="Araport" id="AT2G37410"/>
<dbReference type="TAIR" id="AT2G37410">
    <property type="gene designation" value="TIM17-2"/>
</dbReference>
<dbReference type="eggNOG" id="KOG1652">
    <property type="taxonomic scope" value="Eukaryota"/>
</dbReference>
<dbReference type="HOGENOM" id="CLU_087811_0_0_1"/>
<dbReference type="InParanoid" id="Q9SP35"/>
<dbReference type="OMA" id="AFTMGCF"/>
<dbReference type="PhylomeDB" id="Q9SP35"/>
<dbReference type="CD-CODE" id="4299E36E">
    <property type="entry name" value="Nucleolus"/>
</dbReference>
<dbReference type="PRO" id="PR:Q9SP35"/>
<dbReference type="Proteomes" id="UP000006548">
    <property type="component" value="Chromosome 2"/>
</dbReference>
<dbReference type="ExpressionAtlas" id="Q9SP35">
    <property type="expression patterns" value="baseline and differential"/>
</dbReference>
<dbReference type="GO" id="GO:0005783">
    <property type="term" value="C:endoplasmic reticulum"/>
    <property type="evidence" value="ECO:0007005"/>
    <property type="project" value="TAIR"/>
</dbReference>
<dbReference type="GO" id="GO:0005743">
    <property type="term" value="C:mitochondrial inner membrane"/>
    <property type="evidence" value="ECO:0000314"/>
    <property type="project" value="TAIR"/>
</dbReference>
<dbReference type="GO" id="GO:0005741">
    <property type="term" value="C:mitochondrial outer membrane"/>
    <property type="evidence" value="ECO:0000314"/>
    <property type="project" value="TAIR"/>
</dbReference>
<dbReference type="GO" id="GO:0005739">
    <property type="term" value="C:mitochondrion"/>
    <property type="evidence" value="ECO:0007005"/>
    <property type="project" value="TAIR"/>
</dbReference>
<dbReference type="GO" id="GO:0005744">
    <property type="term" value="C:TIM23 mitochondrial import inner membrane translocase complex"/>
    <property type="evidence" value="ECO:0000304"/>
    <property type="project" value="TAIR"/>
</dbReference>
<dbReference type="GO" id="GO:0045039">
    <property type="term" value="P:protein insertion into mitochondrial inner membrane"/>
    <property type="evidence" value="ECO:0000314"/>
    <property type="project" value="TAIR"/>
</dbReference>
<dbReference type="Gene3D" id="1.20.5.320">
    <property type="entry name" value="6-Phosphogluconate Dehydrogenase, domain 3"/>
    <property type="match status" value="1"/>
</dbReference>
<dbReference type="PANTHER" id="PTHR10485:SF0">
    <property type="entry name" value="AT05822P-RELATED"/>
    <property type="match status" value="1"/>
</dbReference>
<dbReference type="PANTHER" id="PTHR10485">
    <property type="entry name" value="MITOCHONDRIAL IMPORT INNER MEMBRANE TRANSLOCASE SUBUNIT TIM-17"/>
    <property type="match status" value="1"/>
</dbReference>
<dbReference type="Pfam" id="PF02466">
    <property type="entry name" value="Tim17"/>
    <property type="match status" value="1"/>
</dbReference>